<organism>
    <name type="scientific">Arabidopsis thaliana</name>
    <name type="common">Mouse-ear cress</name>
    <dbReference type="NCBI Taxonomy" id="3702"/>
    <lineage>
        <taxon>Eukaryota</taxon>
        <taxon>Viridiplantae</taxon>
        <taxon>Streptophyta</taxon>
        <taxon>Embryophyta</taxon>
        <taxon>Tracheophyta</taxon>
        <taxon>Spermatophyta</taxon>
        <taxon>Magnoliopsida</taxon>
        <taxon>eudicotyledons</taxon>
        <taxon>Gunneridae</taxon>
        <taxon>Pentapetalae</taxon>
        <taxon>rosids</taxon>
        <taxon>malvids</taxon>
        <taxon>Brassicales</taxon>
        <taxon>Brassicaceae</taxon>
        <taxon>Camelineae</taxon>
        <taxon>Arabidopsis</taxon>
    </lineage>
</organism>
<name>PUM17_ARATH</name>
<accession>Q9C8B8</accession>
<accession>F4I006</accession>
<dbReference type="EMBL" id="AC027032">
    <property type="protein sequence ID" value="AAG51092.1"/>
    <property type="status" value="ALT_SEQ"/>
    <property type="molecule type" value="Genomic_DNA"/>
</dbReference>
<dbReference type="EMBL" id="CP002684">
    <property type="protein sequence ID" value="AEE31831.1"/>
    <property type="status" value="ALT_SEQ"/>
    <property type="molecule type" value="Genomic_DNA"/>
</dbReference>
<dbReference type="PIR" id="D86480">
    <property type="entry name" value="D86480"/>
</dbReference>
<dbReference type="RefSeq" id="NP_174820.1">
    <property type="nucleotide sequence ID" value="NM_103284.1"/>
</dbReference>
<dbReference type="SMR" id="Q9C8B8"/>
<dbReference type="STRING" id="3702.Q9C8B8"/>
<dbReference type="PaxDb" id="3702-AT1G35850.1"/>
<dbReference type="GeneID" id="840487"/>
<dbReference type="KEGG" id="ath:AT1G35850"/>
<dbReference type="Araport" id="AT1G35850"/>
<dbReference type="TAIR" id="AT1G35850">
    <property type="gene designation" value="PUM17"/>
</dbReference>
<dbReference type="eggNOG" id="KOG2049">
    <property type="taxonomic scope" value="Eukaryota"/>
</dbReference>
<dbReference type="InParanoid" id="Q9C8B8"/>
<dbReference type="PhylomeDB" id="Q9C8B8"/>
<dbReference type="Proteomes" id="UP000006548">
    <property type="component" value="Chromosome 1"/>
</dbReference>
<dbReference type="GO" id="GO:0005737">
    <property type="term" value="C:cytoplasm"/>
    <property type="evidence" value="ECO:0000318"/>
    <property type="project" value="GO_Central"/>
</dbReference>
<dbReference type="GO" id="GO:0003729">
    <property type="term" value="F:mRNA binding"/>
    <property type="evidence" value="ECO:0000318"/>
    <property type="project" value="GO_Central"/>
</dbReference>
<dbReference type="GO" id="GO:0010608">
    <property type="term" value="P:post-transcriptional regulation of gene expression"/>
    <property type="evidence" value="ECO:0000318"/>
    <property type="project" value="GO_Central"/>
</dbReference>
<dbReference type="GO" id="GO:0006417">
    <property type="term" value="P:regulation of translation"/>
    <property type="evidence" value="ECO:0007669"/>
    <property type="project" value="UniProtKB-KW"/>
</dbReference>
<dbReference type="Gene3D" id="1.25.10.10">
    <property type="entry name" value="Leucine-rich Repeat Variant"/>
    <property type="match status" value="1"/>
</dbReference>
<dbReference type="InterPro" id="IPR011989">
    <property type="entry name" value="ARM-like"/>
</dbReference>
<dbReference type="InterPro" id="IPR016024">
    <property type="entry name" value="ARM-type_fold"/>
</dbReference>
<dbReference type="InterPro" id="IPR033133">
    <property type="entry name" value="PUM-HD"/>
</dbReference>
<dbReference type="InterPro" id="IPR001313">
    <property type="entry name" value="Pumilio_RNA-bd_rpt"/>
</dbReference>
<dbReference type="PANTHER" id="PTHR12537:SF137">
    <property type="entry name" value="PUMILIO HOMOLOG 16-RELATED"/>
    <property type="match status" value="1"/>
</dbReference>
<dbReference type="PANTHER" id="PTHR12537">
    <property type="entry name" value="RNA BINDING PROTEIN PUMILIO-RELATED"/>
    <property type="match status" value="1"/>
</dbReference>
<dbReference type="Pfam" id="PF00806">
    <property type="entry name" value="PUF"/>
    <property type="match status" value="3"/>
</dbReference>
<dbReference type="SMART" id="SM00025">
    <property type="entry name" value="Pumilio"/>
    <property type="match status" value="5"/>
</dbReference>
<dbReference type="SUPFAM" id="SSF48371">
    <property type="entry name" value="ARM repeat"/>
    <property type="match status" value="1"/>
</dbReference>
<dbReference type="PROSITE" id="PS50302">
    <property type="entry name" value="PUM"/>
    <property type="match status" value="5"/>
</dbReference>
<dbReference type="PROSITE" id="PS50303">
    <property type="entry name" value="PUM_HD"/>
    <property type="match status" value="1"/>
</dbReference>
<proteinExistence type="uncertain"/>
<protein>
    <recommendedName>
        <fullName>Putative pumilio homolog 17</fullName>
        <shortName>APUM-17</shortName>
        <shortName>AtPUM17</shortName>
    </recommendedName>
</protein>
<comment type="function">
    <text evidence="1">Sequence-specific RNA-binding protein that regulates translation and mRNA stability by binding the 3'-UTR of target mRNAs.</text>
</comment>
<comment type="subcellular location">
    <subcellularLocation>
        <location evidence="3">Cytoplasm</location>
    </subcellularLocation>
</comment>
<comment type="domain">
    <text evidence="1">The pumilio repeats mediate the association with RNA by packing together to form a right-handed superhelix that approximates a half donut. The number as well as the specific sequence of the repeats determine the specificity for target mRNAs (By similarity).</text>
</comment>
<comment type="caution">
    <text evidence="3">Could be the product of a pseudogene.</text>
</comment>
<comment type="sequence caution" evidence="3">
    <conflict type="erroneous gene model prediction">
        <sequence resource="EMBL-CDS" id="AAG51092"/>
    </conflict>
</comment>
<comment type="sequence caution" evidence="3">
    <conflict type="frameshift">
        <sequence resource="EMBL-CDS" id="AAG51092"/>
    </conflict>
</comment>
<comment type="sequence caution" evidence="3">
    <conflict type="erroneous gene model prediction">
        <sequence resource="EMBL-CDS" id="AEE31831"/>
    </conflict>
</comment>
<keyword id="KW-0963">Cytoplasm</keyword>
<keyword id="KW-1185">Reference proteome</keyword>
<keyword id="KW-0677">Repeat</keyword>
<keyword id="KW-0694">RNA-binding</keyword>
<keyword id="KW-0810">Translation regulation</keyword>
<reference key="1">
    <citation type="journal article" date="2000" name="Nature">
        <title>Sequence and analysis of chromosome 1 of the plant Arabidopsis thaliana.</title>
        <authorList>
            <person name="Theologis A."/>
            <person name="Ecker J.R."/>
            <person name="Palm C.J."/>
            <person name="Federspiel N.A."/>
            <person name="Kaul S."/>
            <person name="White O."/>
            <person name="Alonso J."/>
            <person name="Altafi H."/>
            <person name="Araujo R."/>
            <person name="Bowman C.L."/>
            <person name="Brooks S.Y."/>
            <person name="Buehler E."/>
            <person name="Chan A."/>
            <person name="Chao Q."/>
            <person name="Chen H."/>
            <person name="Cheuk R.F."/>
            <person name="Chin C.W."/>
            <person name="Chung M.K."/>
            <person name="Conn L."/>
            <person name="Conway A.B."/>
            <person name="Conway A.R."/>
            <person name="Creasy T.H."/>
            <person name="Dewar K."/>
            <person name="Dunn P."/>
            <person name="Etgu P."/>
            <person name="Feldblyum T.V."/>
            <person name="Feng J.-D."/>
            <person name="Fong B."/>
            <person name="Fujii C.Y."/>
            <person name="Gill J.E."/>
            <person name="Goldsmith A.D."/>
            <person name="Haas B."/>
            <person name="Hansen N.F."/>
            <person name="Hughes B."/>
            <person name="Huizar L."/>
            <person name="Hunter J.L."/>
            <person name="Jenkins J."/>
            <person name="Johnson-Hopson C."/>
            <person name="Khan S."/>
            <person name="Khaykin E."/>
            <person name="Kim C.J."/>
            <person name="Koo H.L."/>
            <person name="Kremenetskaia I."/>
            <person name="Kurtz D.B."/>
            <person name="Kwan A."/>
            <person name="Lam B."/>
            <person name="Langin-Hooper S."/>
            <person name="Lee A."/>
            <person name="Lee J.M."/>
            <person name="Lenz C.A."/>
            <person name="Li J.H."/>
            <person name="Li Y.-P."/>
            <person name="Lin X."/>
            <person name="Liu S.X."/>
            <person name="Liu Z.A."/>
            <person name="Luros J.S."/>
            <person name="Maiti R."/>
            <person name="Marziali A."/>
            <person name="Militscher J."/>
            <person name="Miranda M."/>
            <person name="Nguyen M."/>
            <person name="Nierman W.C."/>
            <person name="Osborne B.I."/>
            <person name="Pai G."/>
            <person name="Peterson J."/>
            <person name="Pham P.K."/>
            <person name="Rizzo M."/>
            <person name="Rooney T."/>
            <person name="Rowley D."/>
            <person name="Sakano H."/>
            <person name="Salzberg S.L."/>
            <person name="Schwartz J.R."/>
            <person name="Shinn P."/>
            <person name="Southwick A.M."/>
            <person name="Sun H."/>
            <person name="Tallon L.J."/>
            <person name="Tambunga G."/>
            <person name="Toriumi M.J."/>
            <person name="Town C.D."/>
            <person name="Utterback T."/>
            <person name="Van Aken S."/>
            <person name="Vaysberg M."/>
            <person name="Vysotskaia V.S."/>
            <person name="Walker M."/>
            <person name="Wu D."/>
            <person name="Yu G."/>
            <person name="Fraser C.M."/>
            <person name="Venter J.C."/>
            <person name="Davis R.W."/>
        </authorList>
    </citation>
    <scope>NUCLEOTIDE SEQUENCE [LARGE SCALE GENOMIC DNA]</scope>
    <source>
        <strain>cv. Columbia</strain>
    </source>
</reference>
<reference key="2">
    <citation type="journal article" date="2017" name="Plant J.">
        <title>Araport11: a complete reannotation of the Arabidopsis thaliana reference genome.</title>
        <authorList>
            <person name="Cheng C.Y."/>
            <person name="Krishnakumar V."/>
            <person name="Chan A.P."/>
            <person name="Thibaud-Nissen F."/>
            <person name="Schobel S."/>
            <person name="Town C.D."/>
        </authorList>
    </citation>
    <scope>GENOME REANNOTATION</scope>
    <source>
        <strain>cv. Columbia</strain>
    </source>
</reference>
<reference key="3">
    <citation type="journal article" date="2009" name="FEBS J.">
        <title>Molecular characterization of Arabidopsis thaliana PUF proteins -- binding specificity and target candidates.</title>
        <authorList>
            <person name="Francischini C.W."/>
            <person name="Quaggio R.B."/>
        </authorList>
    </citation>
    <scope>GENE FAMILY</scope>
</reference>
<reference key="4">
    <citation type="journal article" date="2010" name="BMC Plant Biol.">
        <title>The Puf family of RNA-binding proteins in plants: phylogeny, structural modeling, activity and subcellular localization.</title>
        <authorList>
            <person name="Tam P.P."/>
            <person name="Barrette-Ng I.H."/>
            <person name="Simon D.M."/>
            <person name="Tam M.W."/>
            <person name="Ang A.L."/>
            <person name="Muench D.G."/>
        </authorList>
    </citation>
    <scope>GENE FAMILY</scope>
</reference>
<gene>
    <name type="primary">APUM17</name>
    <name type="ordered locus">At1g35850</name>
    <name type="ORF">F10O5.3</name>
</gene>
<sequence length="332" mass="38511">MTNINRLSMSTMFNALHEILNEEPLAIPPPPSRGGYSYFHIRTTEMDLQRMFNFMTGSEDLKDDISVLDTGMLMWMASFLTSDSDYFMVITRNKNGSKSLQKLMRMSDDMDVFFFVAIMRLFIHVMIDKYASYVAIQGMRIFKQDKRELMYDHILRYALFLARDQYGCIALNEIIKELDDPYYRDELMDIVSNNALLLSNDAYGNFVVQHVLKLHDSRCTGNIADKLCGYCVELSFKKYGSYIVERLLEVRDIPMATIVLDLLACKTEMLIRLARSENGNFVVCKLLELTNDILTADLFYSLVNKLRPYRFLLHRFPESKIVAILGSMRVPN</sequence>
<feature type="chain" id="PRO_0000401399" description="Putative pumilio homolog 17">
    <location>
        <begin position="1"/>
        <end position="332"/>
    </location>
</feature>
<feature type="domain" description="PUM-HD" evidence="2">
    <location>
        <begin position="1"/>
        <end position="302"/>
    </location>
</feature>
<feature type="repeat" description="Pumilio 1">
    <location>
        <begin position="82"/>
        <end position="117"/>
    </location>
</feature>
<feature type="repeat" description="Pumilio 2; degenerate">
    <location>
        <begin position="118"/>
        <end position="152"/>
    </location>
</feature>
<feature type="repeat" description="Pumilio 3">
    <location>
        <begin position="153"/>
        <end position="188"/>
    </location>
</feature>
<feature type="repeat" description="Pumilio 4">
    <location>
        <begin position="189"/>
        <end position="225"/>
    </location>
</feature>
<feature type="repeat" description="Pumilio 5">
    <location>
        <begin position="226"/>
        <end position="264"/>
    </location>
</feature>
<feature type="repeat" description="Pumilio 6">
    <location>
        <begin position="265"/>
        <end position="300"/>
    </location>
</feature>
<evidence type="ECO:0000250" key="1"/>
<evidence type="ECO:0000255" key="2">
    <source>
        <dbReference type="PROSITE-ProRule" id="PRU00318"/>
    </source>
</evidence>
<evidence type="ECO:0000305" key="3"/>